<sequence>MTDTEKSFKVVLLGEGCVGKTSIVFRYIDNIFNDKHLMTQHAGFFQKHINIGGKRICLTIWDTAGQERFHALGPIYYRGSQGALVVYDITDNDSFIKAKNWIKELKTMLGNDISLCIIGNKCDLEKTRVIPLADAEAYAKSVGAIHYSTSAKLNKGIEELFLDLTRRMILNSSGVVIHSNTNTTGQTTNRSERIPIVPDSDSGNKQPGCCSN</sequence>
<evidence type="ECO:0000250" key="1"/>
<evidence type="ECO:0000256" key="2">
    <source>
        <dbReference type="SAM" id="MobiDB-lite"/>
    </source>
</evidence>
<evidence type="ECO:0000269" key="3">
    <source>
    </source>
</evidence>
<evidence type="ECO:0000305" key="4"/>
<gene>
    <name type="primary">rab21</name>
    <name type="synonym">rabB</name>
    <name type="ORF">DDB_G0286553</name>
</gene>
<proteinExistence type="evidence at protein level"/>
<comment type="function">
    <text>Involved in the regulation of phagocytosis.</text>
</comment>
<comment type="subunit">
    <text evidence="3">Interacts with LIM domain proteins limF and ChLim.</text>
</comment>
<comment type="interaction">
    <interactant intactId="EBI-1808935">
        <id>P34142</id>
    </interactant>
    <interactant intactId="EBI-1808928">
        <id>Q86I44</id>
        <label>limF</label>
    </interactant>
    <organismsDiffer>false</organismsDiffer>
    <experiments>4</experiments>
</comment>
<comment type="subcellular location">
    <subcellularLocation>
        <location evidence="4">Cell membrane</location>
        <topology evidence="4">Lipid-anchor</topology>
        <orientation evidence="4">Cytoplasmic side</orientation>
    </subcellularLocation>
</comment>
<comment type="induction">
    <text evidence="3">Activated by limf and repressed by ChLim.</text>
</comment>
<comment type="similarity">
    <text evidence="4">Belongs to the small GTPase superfamily. Rab family.</text>
</comment>
<reference key="1">
    <citation type="journal article" date="1993" name="Gene">
        <title>Cloning and characterization of five novel Dictyostelium discoideum rab-related genes.</title>
        <authorList>
            <person name="Bush J.M. IV"/>
            <person name="Franek K."/>
            <person name="Daniel J.M."/>
            <person name="Spiegelman G.B."/>
            <person name="Weeks G."/>
            <person name="Cardelli J.A."/>
        </authorList>
    </citation>
    <scope>NUCLEOTIDE SEQUENCE [MRNA]</scope>
    <source>
        <strain>AX3</strain>
    </source>
</reference>
<reference key="2">
    <citation type="journal article" date="2005" name="Nature">
        <title>The genome of the social amoeba Dictyostelium discoideum.</title>
        <authorList>
            <person name="Eichinger L."/>
            <person name="Pachebat J.A."/>
            <person name="Gloeckner G."/>
            <person name="Rajandream M.A."/>
            <person name="Sucgang R."/>
            <person name="Berriman M."/>
            <person name="Song J."/>
            <person name="Olsen R."/>
            <person name="Szafranski K."/>
            <person name="Xu Q."/>
            <person name="Tunggal B."/>
            <person name="Kummerfeld S."/>
            <person name="Madera M."/>
            <person name="Konfortov B.A."/>
            <person name="Rivero F."/>
            <person name="Bankier A.T."/>
            <person name="Lehmann R."/>
            <person name="Hamlin N."/>
            <person name="Davies R."/>
            <person name="Gaudet P."/>
            <person name="Fey P."/>
            <person name="Pilcher K."/>
            <person name="Chen G."/>
            <person name="Saunders D."/>
            <person name="Sodergren E.J."/>
            <person name="Davis P."/>
            <person name="Kerhornou A."/>
            <person name="Nie X."/>
            <person name="Hall N."/>
            <person name="Anjard C."/>
            <person name="Hemphill L."/>
            <person name="Bason N."/>
            <person name="Farbrother P."/>
            <person name="Desany B."/>
            <person name="Just E."/>
            <person name="Morio T."/>
            <person name="Rost R."/>
            <person name="Churcher C.M."/>
            <person name="Cooper J."/>
            <person name="Haydock S."/>
            <person name="van Driessche N."/>
            <person name="Cronin A."/>
            <person name="Goodhead I."/>
            <person name="Muzny D.M."/>
            <person name="Mourier T."/>
            <person name="Pain A."/>
            <person name="Lu M."/>
            <person name="Harper D."/>
            <person name="Lindsay R."/>
            <person name="Hauser H."/>
            <person name="James K.D."/>
            <person name="Quiles M."/>
            <person name="Madan Babu M."/>
            <person name="Saito T."/>
            <person name="Buchrieser C."/>
            <person name="Wardroper A."/>
            <person name="Felder M."/>
            <person name="Thangavelu M."/>
            <person name="Johnson D."/>
            <person name="Knights A."/>
            <person name="Loulseged H."/>
            <person name="Mungall K.L."/>
            <person name="Oliver K."/>
            <person name="Price C."/>
            <person name="Quail M.A."/>
            <person name="Urushihara H."/>
            <person name="Hernandez J."/>
            <person name="Rabbinowitsch E."/>
            <person name="Steffen D."/>
            <person name="Sanders M."/>
            <person name="Ma J."/>
            <person name="Kohara Y."/>
            <person name="Sharp S."/>
            <person name="Simmonds M.N."/>
            <person name="Spiegler S."/>
            <person name="Tivey A."/>
            <person name="Sugano S."/>
            <person name="White B."/>
            <person name="Walker D."/>
            <person name="Woodward J.R."/>
            <person name="Winckler T."/>
            <person name="Tanaka Y."/>
            <person name="Shaulsky G."/>
            <person name="Schleicher M."/>
            <person name="Weinstock G.M."/>
            <person name="Rosenthal A."/>
            <person name="Cox E.C."/>
            <person name="Chisholm R.L."/>
            <person name="Gibbs R.A."/>
            <person name="Loomis W.F."/>
            <person name="Platzer M."/>
            <person name="Kay R.R."/>
            <person name="Williams J.G."/>
            <person name="Dear P.H."/>
            <person name="Noegel A.A."/>
            <person name="Barrell B.G."/>
            <person name="Kuspa A."/>
        </authorList>
    </citation>
    <scope>NUCLEOTIDE SEQUENCE [LARGE SCALE GENOMIC DNA]</scope>
    <source>
        <strain>AX4</strain>
    </source>
</reference>
<reference key="3">
    <citation type="journal article" date="2005" name="EMBO J.">
        <title>A Rab21/LIM-only/CH-LIM complex regulates phagocytosis via both activating and inhibitory mechanisms.</title>
        <authorList>
            <person name="Khurana T."/>
            <person name="Brzostowski J.A."/>
            <person name="Kimmel A.R."/>
        </authorList>
    </citation>
    <scope>INDUCTION</scope>
    <scope>INTERACTION WITH LIMF AND CHLIM</scope>
    <scope>MUTAGENESIS OF THR-21 AND GLN-66</scope>
</reference>
<dbReference type="EMBL" id="L21012">
    <property type="protein sequence ID" value="AAC37383.1"/>
    <property type="molecule type" value="mRNA"/>
</dbReference>
<dbReference type="EMBL" id="AAFI02000089">
    <property type="protein sequence ID" value="EAL64032.1"/>
    <property type="molecule type" value="Genomic_DNA"/>
</dbReference>
<dbReference type="RefSeq" id="XP_637605.1">
    <property type="nucleotide sequence ID" value="XM_632513.1"/>
</dbReference>
<dbReference type="SMR" id="P34142"/>
<dbReference type="FunCoup" id="P34142">
    <property type="interactions" value="154"/>
</dbReference>
<dbReference type="IntAct" id="P34142">
    <property type="interactions" value="2"/>
</dbReference>
<dbReference type="STRING" id="44689.P34142"/>
<dbReference type="PaxDb" id="44689-DDB0191253"/>
<dbReference type="EnsemblProtists" id="EAL64032">
    <property type="protein sequence ID" value="EAL64032"/>
    <property type="gene ID" value="DDB_G0286553"/>
</dbReference>
<dbReference type="GeneID" id="8625745"/>
<dbReference type="KEGG" id="ddi:DDB_G0286553"/>
<dbReference type="dictyBase" id="DDB_G0286553">
    <property type="gene designation" value="rab21"/>
</dbReference>
<dbReference type="VEuPathDB" id="AmoebaDB:DDB_G0286553"/>
<dbReference type="eggNOG" id="KOG0088">
    <property type="taxonomic scope" value="Eukaryota"/>
</dbReference>
<dbReference type="HOGENOM" id="CLU_041217_10_2_1"/>
<dbReference type="InParanoid" id="P34142"/>
<dbReference type="OMA" id="HMEIWDT"/>
<dbReference type="PhylomeDB" id="P34142"/>
<dbReference type="Reactome" id="R-DDI-8873719">
    <property type="pathway name" value="RAB geranylgeranylation"/>
</dbReference>
<dbReference type="Reactome" id="R-DDI-8876198">
    <property type="pathway name" value="RAB GEFs exchange GTP for GDP on RABs"/>
</dbReference>
<dbReference type="PRO" id="PR:P34142"/>
<dbReference type="Proteomes" id="UP000002195">
    <property type="component" value="Chromosome 4"/>
</dbReference>
<dbReference type="GO" id="GO:0005829">
    <property type="term" value="C:cytosol"/>
    <property type="evidence" value="ECO:0000314"/>
    <property type="project" value="dictyBase"/>
</dbReference>
<dbReference type="GO" id="GO:0005769">
    <property type="term" value="C:early endosome"/>
    <property type="evidence" value="ECO:0000318"/>
    <property type="project" value="GO_Central"/>
</dbReference>
<dbReference type="GO" id="GO:0012505">
    <property type="term" value="C:endomembrane system"/>
    <property type="evidence" value="ECO:0000318"/>
    <property type="project" value="GO_Central"/>
</dbReference>
<dbReference type="GO" id="GO:0005811">
    <property type="term" value="C:lipid droplet"/>
    <property type="evidence" value="ECO:0007005"/>
    <property type="project" value="dictyBase"/>
</dbReference>
<dbReference type="GO" id="GO:0140220">
    <property type="term" value="C:pathogen-containing vacuole"/>
    <property type="evidence" value="ECO:0007005"/>
    <property type="project" value="dictyBase"/>
</dbReference>
<dbReference type="GO" id="GO:0005886">
    <property type="term" value="C:plasma membrane"/>
    <property type="evidence" value="ECO:0007669"/>
    <property type="project" value="UniProtKB-SubCell"/>
</dbReference>
<dbReference type="GO" id="GO:0005525">
    <property type="term" value="F:GTP binding"/>
    <property type="evidence" value="ECO:0007669"/>
    <property type="project" value="UniProtKB-KW"/>
</dbReference>
<dbReference type="GO" id="GO:0003924">
    <property type="term" value="F:GTPase activity"/>
    <property type="evidence" value="ECO:0000318"/>
    <property type="project" value="GO_Central"/>
</dbReference>
<dbReference type="GO" id="GO:0048870">
    <property type="term" value="P:cell motility"/>
    <property type="evidence" value="ECO:0000314"/>
    <property type="project" value="dictyBase"/>
</dbReference>
<dbReference type="GO" id="GO:0030866">
    <property type="term" value="P:cortical actin cytoskeleton organization"/>
    <property type="evidence" value="ECO:0000315"/>
    <property type="project" value="dictyBase"/>
</dbReference>
<dbReference type="GO" id="GO:0046847">
    <property type="term" value="P:filopodium assembly"/>
    <property type="evidence" value="ECO:0000315"/>
    <property type="project" value="dictyBase"/>
</dbReference>
<dbReference type="GO" id="GO:0006971">
    <property type="term" value="P:hypotonic response"/>
    <property type="evidence" value="ECO:0007007"/>
    <property type="project" value="dictyBase"/>
</dbReference>
<dbReference type="GO" id="GO:0006886">
    <property type="term" value="P:intracellular protein transport"/>
    <property type="evidence" value="ECO:0000318"/>
    <property type="project" value="GO_Central"/>
</dbReference>
<dbReference type="GO" id="GO:0006909">
    <property type="term" value="P:phagocytosis"/>
    <property type="evidence" value="ECO:0007669"/>
    <property type="project" value="UniProtKB-KW"/>
</dbReference>
<dbReference type="GO" id="GO:0050766">
    <property type="term" value="P:positive regulation of phagocytosis"/>
    <property type="evidence" value="ECO:0000315"/>
    <property type="project" value="dictyBase"/>
</dbReference>
<dbReference type="GO" id="GO:0032482">
    <property type="term" value="P:Rab protein signal transduction"/>
    <property type="evidence" value="ECO:0007669"/>
    <property type="project" value="InterPro"/>
</dbReference>
<dbReference type="CDD" id="cd04123">
    <property type="entry name" value="Rab21"/>
    <property type="match status" value="1"/>
</dbReference>
<dbReference type="FunFam" id="3.40.50.300:FF:000550">
    <property type="entry name" value="ras-related protein Rab-21"/>
    <property type="match status" value="1"/>
</dbReference>
<dbReference type="Gene3D" id="3.40.50.300">
    <property type="entry name" value="P-loop containing nucleotide triphosphate hydrolases"/>
    <property type="match status" value="1"/>
</dbReference>
<dbReference type="InterPro" id="IPR027417">
    <property type="entry name" value="P-loop_NTPase"/>
</dbReference>
<dbReference type="InterPro" id="IPR041833">
    <property type="entry name" value="Rab21"/>
</dbReference>
<dbReference type="InterPro" id="IPR005225">
    <property type="entry name" value="Small_GTP-bd"/>
</dbReference>
<dbReference type="InterPro" id="IPR001806">
    <property type="entry name" value="Small_GTPase"/>
</dbReference>
<dbReference type="NCBIfam" id="TIGR00231">
    <property type="entry name" value="small_GTP"/>
    <property type="match status" value="1"/>
</dbReference>
<dbReference type="PANTHER" id="PTHR47978">
    <property type="match status" value="1"/>
</dbReference>
<dbReference type="Pfam" id="PF00071">
    <property type="entry name" value="Ras"/>
    <property type="match status" value="1"/>
</dbReference>
<dbReference type="PRINTS" id="PR00449">
    <property type="entry name" value="RASTRNSFRMNG"/>
</dbReference>
<dbReference type="SMART" id="SM00175">
    <property type="entry name" value="RAB"/>
    <property type="match status" value="1"/>
</dbReference>
<dbReference type="SMART" id="SM00176">
    <property type="entry name" value="RAN"/>
    <property type="match status" value="1"/>
</dbReference>
<dbReference type="SMART" id="SM00173">
    <property type="entry name" value="RAS"/>
    <property type="match status" value="1"/>
</dbReference>
<dbReference type="SMART" id="SM00174">
    <property type="entry name" value="RHO"/>
    <property type="match status" value="1"/>
</dbReference>
<dbReference type="SUPFAM" id="SSF52540">
    <property type="entry name" value="P-loop containing nucleoside triphosphate hydrolases"/>
    <property type="match status" value="1"/>
</dbReference>
<dbReference type="PROSITE" id="PS51419">
    <property type="entry name" value="RAB"/>
    <property type="match status" value="1"/>
</dbReference>
<accession>P34142</accession>
<accession>Q54LF6</accession>
<name>RAB21_DICDI</name>
<keyword id="KW-1003">Cell membrane</keyword>
<keyword id="KW-0342">GTP-binding</keyword>
<keyword id="KW-0449">Lipoprotein</keyword>
<keyword id="KW-0472">Membrane</keyword>
<keyword id="KW-0547">Nucleotide-binding</keyword>
<keyword id="KW-0581">Phagocytosis</keyword>
<keyword id="KW-0636">Prenylation</keyword>
<keyword id="KW-0653">Protein transport</keyword>
<keyword id="KW-1185">Reference proteome</keyword>
<keyword id="KW-0813">Transport</keyword>
<protein>
    <recommendedName>
        <fullName>Ras-related protein Rab-21</fullName>
    </recommendedName>
    <alternativeName>
        <fullName>Ras-related protein RabB</fullName>
    </alternativeName>
</protein>
<feature type="chain" id="PRO_0000121269" description="Ras-related protein Rab-21">
    <location>
        <begin position="1"/>
        <end position="212"/>
    </location>
</feature>
<feature type="region of interest" description="Disordered" evidence="2">
    <location>
        <begin position="181"/>
        <end position="212"/>
    </location>
</feature>
<feature type="compositionally biased region" description="Polar residues" evidence="2">
    <location>
        <begin position="201"/>
        <end position="212"/>
    </location>
</feature>
<feature type="binding site" evidence="1">
    <location>
        <begin position="14"/>
        <end position="21"/>
    </location>
    <ligand>
        <name>GTP</name>
        <dbReference type="ChEBI" id="CHEBI:37565"/>
    </ligand>
</feature>
<feature type="binding site" evidence="1">
    <location>
        <begin position="62"/>
        <end position="66"/>
    </location>
    <ligand>
        <name>GTP</name>
        <dbReference type="ChEBI" id="CHEBI:37565"/>
    </ligand>
</feature>
<feature type="binding site" evidence="1">
    <location>
        <begin position="120"/>
        <end position="123"/>
    </location>
    <ligand>
        <name>GTP</name>
        <dbReference type="ChEBI" id="CHEBI:37565"/>
    </ligand>
</feature>
<feature type="lipid moiety-binding region" description="S-geranylgeranyl cysteine" evidence="1">
    <location>
        <position position="209"/>
    </location>
</feature>
<feature type="lipid moiety-binding region" description="S-geranylgeranyl cysteine" evidence="1">
    <location>
        <position position="210"/>
    </location>
</feature>
<feature type="mutagenesis site" description="Dominant negative; alters cortical F-actin organization and decreases the rate of phagocytosis by 2-fold." evidence="3">
    <original>T</original>
    <variation>N</variation>
    <location>
        <position position="21"/>
    </location>
</feature>
<feature type="mutagenesis site" description="Alters cortical F-actin organization and increases the rate of phagocytosis by 2-fold." evidence="3">
    <original>Q</original>
    <variation>L</variation>
    <location>
        <position position="66"/>
    </location>
</feature>
<feature type="sequence conflict" description="In Ref. 1; AAC37383." evidence="4" ref="1">
    <original>N</original>
    <variation>NN</variation>
    <location>
        <position position="204"/>
    </location>
</feature>
<organism>
    <name type="scientific">Dictyostelium discoideum</name>
    <name type="common">Social amoeba</name>
    <dbReference type="NCBI Taxonomy" id="44689"/>
    <lineage>
        <taxon>Eukaryota</taxon>
        <taxon>Amoebozoa</taxon>
        <taxon>Evosea</taxon>
        <taxon>Eumycetozoa</taxon>
        <taxon>Dictyostelia</taxon>
        <taxon>Dictyosteliales</taxon>
        <taxon>Dictyosteliaceae</taxon>
        <taxon>Dictyostelium</taxon>
    </lineage>
</organism>